<sequence length="230" mass="26609">MSKLVLIRHGQSEWNLSNQFTGWVDVNLSEKGVEEAKKAGRLIKEHGLEFDQAYTSLLTRAIKTLHYALEESDQLWIPETKTWRLNERHYGALQGLNKKDTAEKYGDEQVHIWRRSYDVLPPAIDDDNEYSQAHDRRYANLDPHIVPKAENLHVTLDRVMPFWEDHIAPDLLDGKNVIIAAHGNSLRALTKYIENISDDDIMDLEMKTGEPVVYTFDDKLDVVNKEKLDD</sequence>
<organism>
    <name type="scientific">Lactobacillus johnsonii (strain CNCM I-12250 / La1 / NCC 533)</name>
    <dbReference type="NCBI Taxonomy" id="257314"/>
    <lineage>
        <taxon>Bacteria</taxon>
        <taxon>Bacillati</taxon>
        <taxon>Bacillota</taxon>
        <taxon>Bacilli</taxon>
        <taxon>Lactobacillales</taxon>
        <taxon>Lactobacillaceae</taxon>
        <taxon>Lactobacillus</taxon>
    </lineage>
</organism>
<keyword id="KW-0312">Gluconeogenesis</keyword>
<keyword id="KW-0324">Glycolysis</keyword>
<keyword id="KW-0413">Isomerase</keyword>
<gene>
    <name evidence="1" type="primary">gpmA1</name>
    <name type="ordered locus">LJ_0164</name>
</gene>
<name>GPMA1_LACJO</name>
<dbReference type="EC" id="5.4.2.11" evidence="1"/>
<dbReference type="EMBL" id="AE017198">
    <property type="protein sequence ID" value="AAS08146.1"/>
    <property type="molecule type" value="Genomic_DNA"/>
</dbReference>
<dbReference type="RefSeq" id="WP_004896047.1">
    <property type="nucleotide sequence ID" value="NC_005362.1"/>
</dbReference>
<dbReference type="SMR" id="Q74LL9"/>
<dbReference type="KEGG" id="ljo:LJ_0164"/>
<dbReference type="eggNOG" id="COG0588">
    <property type="taxonomic scope" value="Bacteria"/>
</dbReference>
<dbReference type="HOGENOM" id="CLU_033323_1_5_9"/>
<dbReference type="UniPathway" id="UPA00109">
    <property type="reaction ID" value="UER00186"/>
</dbReference>
<dbReference type="Proteomes" id="UP000000581">
    <property type="component" value="Chromosome"/>
</dbReference>
<dbReference type="GO" id="GO:0004619">
    <property type="term" value="F:phosphoglycerate mutase activity"/>
    <property type="evidence" value="ECO:0007669"/>
    <property type="project" value="UniProtKB-EC"/>
</dbReference>
<dbReference type="GO" id="GO:0006094">
    <property type="term" value="P:gluconeogenesis"/>
    <property type="evidence" value="ECO:0007669"/>
    <property type="project" value="UniProtKB-UniRule"/>
</dbReference>
<dbReference type="GO" id="GO:0006096">
    <property type="term" value="P:glycolytic process"/>
    <property type="evidence" value="ECO:0007669"/>
    <property type="project" value="UniProtKB-UniRule"/>
</dbReference>
<dbReference type="CDD" id="cd07067">
    <property type="entry name" value="HP_PGM_like"/>
    <property type="match status" value="1"/>
</dbReference>
<dbReference type="FunFam" id="3.40.50.1240:FF:000003">
    <property type="entry name" value="2,3-bisphosphoglycerate-dependent phosphoglycerate mutase"/>
    <property type="match status" value="1"/>
</dbReference>
<dbReference type="Gene3D" id="3.40.50.1240">
    <property type="entry name" value="Phosphoglycerate mutase-like"/>
    <property type="match status" value="1"/>
</dbReference>
<dbReference type="HAMAP" id="MF_01039">
    <property type="entry name" value="PGAM_GpmA"/>
    <property type="match status" value="1"/>
</dbReference>
<dbReference type="InterPro" id="IPR013078">
    <property type="entry name" value="His_Pase_superF_clade-1"/>
</dbReference>
<dbReference type="InterPro" id="IPR029033">
    <property type="entry name" value="His_PPase_superfam"/>
</dbReference>
<dbReference type="InterPro" id="IPR001345">
    <property type="entry name" value="PG/BPGM_mutase_AS"/>
</dbReference>
<dbReference type="InterPro" id="IPR005952">
    <property type="entry name" value="Phosphogly_mut1"/>
</dbReference>
<dbReference type="NCBIfam" id="TIGR01258">
    <property type="entry name" value="pgm_1"/>
    <property type="match status" value="1"/>
</dbReference>
<dbReference type="NCBIfam" id="NF010713">
    <property type="entry name" value="PRK14115.1"/>
    <property type="match status" value="1"/>
</dbReference>
<dbReference type="NCBIfam" id="NF010714">
    <property type="entry name" value="PRK14116.1"/>
    <property type="match status" value="1"/>
</dbReference>
<dbReference type="PANTHER" id="PTHR11931">
    <property type="entry name" value="PHOSPHOGLYCERATE MUTASE"/>
    <property type="match status" value="1"/>
</dbReference>
<dbReference type="Pfam" id="PF00300">
    <property type="entry name" value="His_Phos_1"/>
    <property type="match status" value="1"/>
</dbReference>
<dbReference type="PIRSF" id="PIRSF000709">
    <property type="entry name" value="6PFK_2-Ptase"/>
    <property type="match status" value="1"/>
</dbReference>
<dbReference type="SMART" id="SM00855">
    <property type="entry name" value="PGAM"/>
    <property type="match status" value="1"/>
</dbReference>
<dbReference type="SUPFAM" id="SSF53254">
    <property type="entry name" value="Phosphoglycerate mutase-like"/>
    <property type="match status" value="1"/>
</dbReference>
<dbReference type="PROSITE" id="PS00175">
    <property type="entry name" value="PG_MUTASE"/>
    <property type="match status" value="1"/>
</dbReference>
<feature type="chain" id="PRO_0000179883" description="2,3-bisphosphoglycerate-dependent phosphoglycerate mutase 1">
    <location>
        <begin position="1"/>
        <end position="230"/>
    </location>
</feature>
<feature type="active site" description="Tele-phosphohistidine intermediate" evidence="1">
    <location>
        <position position="9"/>
    </location>
</feature>
<feature type="active site" description="Proton donor/acceptor" evidence="1">
    <location>
        <position position="87"/>
    </location>
</feature>
<feature type="binding site" evidence="1">
    <location>
        <begin position="8"/>
        <end position="15"/>
    </location>
    <ligand>
        <name>substrate</name>
    </ligand>
</feature>
<feature type="binding site" evidence="1">
    <location>
        <begin position="21"/>
        <end position="22"/>
    </location>
    <ligand>
        <name>substrate</name>
    </ligand>
</feature>
<feature type="binding site" evidence="1">
    <location>
        <position position="60"/>
    </location>
    <ligand>
        <name>substrate</name>
    </ligand>
</feature>
<feature type="binding site" evidence="1">
    <location>
        <begin position="87"/>
        <end position="90"/>
    </location>
    <ligand>
        <name>substrate</name>
    </ligand>
</feature>
<feature type="binding site" evidence="1">
    <location>
        <position position="98"/>
    </location>
    <ligand>
        <name>substrate</name>
    </ligand>
</feature>
<feature type="binding site" evidence="1">
    <location>
        <begin position="114"/>
        <end position="115"/>
    </location>
    <ligand>
        <name>substrate</name>
    </ligand>
</feature>
<feature type="binding site" evidence="1">
    <location>
        <begin position="183"/>
        <end position="184"/>
    </location>
    <ligand>
        <name>substrate</name>
    </ligand>
</feature>
<feature type="site" description="Transition state stabilizer" evidence="1">
    <location>
        <position position="182"/>
    </location>
</feature>
<protein>
    <recommendedName>
        <fullName evidence="1">2,3-bisphosphoglycerate-dependent phosphoglycerate mutase 1</fullName>
        <shortName evidence="1">BPG-dependent PGAM 1</shortName>
        <shortName evidence="1">PGAM 1</shortName>
        <shortName evidence="1">Phosphoglyceromutase 1</shortName>
        <shortName evidence="1">dPGM 1</shortName>
        <ecNumber evidence="1">5.4.2.11</ecNumber>
    </recommendedName>
</protein>
<accession>Q74LL9</accession>
<evidence type="ECO:0000255" key="1">
    <source>
        <dbReference type="HAMAP-Rule" id="MF_01039"/>
    </source>
</evidence>
<comment type="function">
    <text evidence="1">Catalyzes the interconversion of 2-phosphoglycerate and 3-phosphoglycerate.</text>
</comment>
<comment type="catalytic activity">
    <reaction evidence="1">
        <text>(2R)-2-phosphoglycerate = (2R)-3-phosphoglycerate</text>
        <dbReference type="Rhea" id="RHEA:15901"/>
        <dbReference type="ChEBI" id="CHEBI:58272"/>
        <dbReference type="ChEBI" id="CHEBI:58289"/>
        <dbReference type="EC" id="5.4.2.11"/>
    </reaction>
</comment>
<comment type="pathway">
    <text evidence="1">Carbohydrate degradation; glycolysis; pyruvate from D-glyceraldehyde 3-phosphate: step 3/5.</text>
</comment>
<comment type="similarity">
    <text evidence="1">Belongs to the phosphoglycerate mutase family. BPG-dependent PGAM subfamily.</text>
</comment>
<reference key="1">
    <citation type="journal article" date="2004" name="Proc. Natl. Acad. Sci. U.S.A.">
        <title>The genome sequence of the probiotic intestinal bacterium Lactobacillus johnsonii NCC 533.</title>
        <authorList>
            <person name="Pridmore R.D."/>
            <person name="Berger B."/>
            <person name="Desiere F."/>
            <person name="Vilanova D."/>
            <person name="Barretto C."/>
            <person name="Pittet A.-C."/>
            <person name="Zwahlen M.-C."/>
            <person name="Rouvet M."/>
            <person name="Altermann E."/>
            <person name="Barrangou R."/>
            <person name="Mollet B."/>
            <person name="Mercenier A."/>
            <person name="Klaenhammer T."/>
            <person name="Arigoni F."/>
            <person name="Schell M.A."/>
        </authorList>
    </citation>
    <scope>NUCLEOTIDE SEQUENCE [LARGE SCALE GENOMIC DNA]</scope>
    <source>
        <strain>CNCM I-1225 / La1 / NCC 533</strain>
    </source>
</reference>
<proteinExistence type="inferred from homology"/>